<protein>
    <recommendedName>
        <fullName evidence="1">Methylated-DNA--protein-cysteine methyltransferase</fullName>
        <ecNumber evidence="1 2">2.1.1.63</ecNumber>
    </recommendedName>
    <alternativeName>
        <fullName evidence="1">6-O-methylguanine-DNA methyltransferase</fullName>
        <shortName evidence="1 4">MGMT</shortName>
    </alternativeName>
    <alternativeName>
        <fullName evidence="1">O-6-methylguanine-DNA-alkyltransferase</fullName>
    </alternativeName>
    <alternativeName>
        <fullName evidence="3">Pk-MGMT</fullName>
    </alternativeName>
</protein>
<feature type="chain" id="PRO_0000139385" description="Methylated-DNA--protein-cysteine methyltransferase">
    <location>
        <begin position="1"/>
        <end position="174"/>
    </location>
</feature>
<feature type="active site" description="Nucleophile; methyl group acceptor" evidence="1 6">
    <location>
        <position position="141"/>
    </location>
</feature>
<feature type="strand" evidence="7">
    <location>
        <begin position="2"/>
        <end position="9"/>
    </location>
</feature>
<feature type="strand" evidence="7">
    <location>
        <begin position="12"/>
        <end position="32"/>
    </location>
</feature>
<feature type="helix" evidence="7">
    <location>
        <begin position="33"/>
        <end position="49"/>
    </location>
</feature>
<feature type="helix" evidence="7">
    <location>
        <begin position="63"/>
        <end position="71"/>
    </location>
</feature>
<feature type="helix" evidence="7">
    <location>
        <begin position="77"/>
        <end position="83"/>
    </location>
</feature>
<feature type="helix" evidence="7">
    <location>
        <begin position="91"/>
        <end position="103"/>
    </location>
</feature>
<feature type="helix" evidence="7">
    <location>
        <begin position="112"/>
        <end position="118"/>
    </location>
</feature>
<feature type="helix" evidence="7">
    <location>
        <begin position="123"/>
        <end position="131"/>
    </location>
</feature>
<feature type="turn" evidence="7">
    <location>
        <begin position="136"/>
        <end position="138"/>
    </location>
</feature>
<feature type="helix" evidence="7">
    <location>
        <begin position="141"/>
        <end position="143"/>
    </location>
</feature>
<feature type="strand" evidence="7">
    <location>
        <begin position="144"/>
        <end position="146"/>
    </location>
</feature>
<feature type="helix" evidence="7">
    <location>
        <begin position="157"/>
        <end position="166"/>
    </location>
</feature>
<comment type="function">
    <text evidence="1 2">Involved in the cellular defense against the biological effects of O6-methylguanine (O6-MeG) and O4-methylthymine (O4-MeT) in DNA. Repairs the methylated nucleobase in DNA by stoichiometrically transferring the methyl group to a cysteine residue in the enzyme. This is a suicide reaction: the enzyme is irreversibly inactivated.</text>
</comment>
<comment type="catalytic activity">
    <reaction evidence="1 2">
        <text>a 6-O-methyl-2'-deoxyguanosine in DNA + L-cysteinyl-[protein] = S-methyl-L-cysteinyl-[protein] + a 2'-deoxyguanosine in DNA</text>
        <dbReference type="Rhea" id="RHEA:24000"/>
        <dbReference type="Rhea" id="RHEA-COMP:10131"/>
        <dbReference type="Rhea" id="RHEA-COMP:10132"/>
        <dbReference type="Rhea" id="RHEA-COMP:11367"/>
        <dbReference type="Rhea" id="RHEA-COMP:11368"/>
        <dbReference type="ChEBI" id="CHEBI:29950"/>
        <dbReference type="ChEBI" id="CHEBI:82612"/>
        <dbReference type="ChEBI" id="CHEBI:85445"/>
        <dbReference type="ChEBI" id="CHEBI:85448"/>
        <dbReference type="EC" id="2.1.1.63"/>
    </reaction>
</comment>
<comment type="catalytic activity">
    <reaction evidence="1 2">
        <text>a 4-O-methyl-thymidine in DNA + L-cysteinyl-[protein] = a thymidine in DNA + S-methyl-L-cysteinyl-[protein]</text>
        <dbReference type="Rhea" id="RHEA:53428"/>
        <dbReference type="Rhea" id="RHEA-COMP:10131"/>
        <dbReference type="Rhea" id="RHEA-COMP:10132"/>
        <dbReference type="Rhea" id="RHEA-COMP:13555"/>
        <dbReference type="Rhea" id="RHEA-COMP:13556"/>
        <dbReference type="ChEBI" id="CHEBI:29950"/>
        <dbReference type="ChEBI" id="CHEBI:82612"/>
        <dbReference type="ChEBI" id="CHEBI:137386"/>
        <dbReference type="ChEBI" id="CHEBI:137387"/>
        <dbReference type="EC" id="2.1.1.63"/>
    </reaction>
</comment>
<comment type="biophysicochemical properties">
    <temperatureDependence>
        <text evidence="2">Activity is stable at 90 degrees Celsius for at least 30 minutes.</text>
    </temperatureDependence>
</comment>
<comment type="subcellular location">
    <subcellularLocation>
        <location evidence="1 2">Cytoplasm</location>
    </subcellularLocation>
</comment>
<comment type="miscellaneous">
    <text evidence="5">This enzyme catalyzes only one turnover and therefore is not strictly catalytic. According to one definition, an enzyme is a biocatalyst that acts repeatedly and over many reaction cycles.</text>
</comment>
<comment type="similarity">
    <text evidence="1 5">Belongs to the MGMT family.</text>
</comment>
<reference key="1">
    <citation type="journal article" date="1998" name="Mol. Gen. Genet.">
        <title>The O6-methylguanine-DNA methyltransferase from the hyperthermophilic archaeon Pyrococcus sp. KOD1: a thermostable repair enzyme.</title>
        <authorList>
            <person name="Mendez-Leclere M."/>
            <person name="Nishioka M."/>
            <person name="Yuasa T."/>
            <person name="Fujiwara S."/>
            <person name="Takagi M."/>
            <person name="Imanaka T."/>
        </authorList>
    </citation>
    <scope>NUCLEOTIDE SEQUENCE [GENOMIC DNA]</scope>
    <scope>FUNCTION</scope>
    <scope>CATALYTIC ACTIVITY</scope>
    <scope>BIOPHYSICOCHEMICAL PROPERTIES</scope>
    <scope>SUBCELLULAR LOCATION</scope>
    <source>
        <strain>ATCC BAA-918 / JCM 12380 / KOD1</strain>
    </source>
</reference>
<reference key="2">
    <citation type="journal article" date="2005" name="Genome Res.">
        <title>Complete genome sequence of the hyperthermophilic archaeon Thermococcus kodakaraensis KOD1 and comparison with Pyrococcus genomes.</title>
        <authorList>
            <person name="Fukui T."/>
            <person name="Atomi H."/>
            <person name="Kanai T."/>
            <person name="Matsumi R."/>
            <person name="Fujiwara S."/>
            <person name="Imanaka T."/>
        </authorList>
    </citation>
    <scope>NUCLEOTIDE SEQUENCE [LARGE SCALE GENOMIC DNA]</scope>
    <source>
        <strain>ATCC BAA-918 / JCM 12380 / KOD1</strain>
    </source>
</reference>
<reference key="3">
    <citation type="journal article" date="1999" name="J. Mol. Biol.">
        <title>Hyperthermostable protein structure maintained by intra and inter-helix ion-pairs in archaeal O6-methylguanine-DNA methyltransferase.</title>
        <authorList>
            <person name="Hashimoto H."/>
            <person name="Inoue T."/>
            <person name="Nishioka M."/>
            <person name="Fujiwara S."/>
            <person name="Takagi M."/>
            <person name="Imanaka T."/>
            <person name="Kai Y."/>
        </authorList>
    </citation>
    <scope>X-RAY CRYSTALLOGRAPHY (1.8 ANGSTROMS)</scope>
    <scope>ACTIVE SITE</scope>
    <source>
        <strain>ATCC BAA-918 / JCM 12380 / KOD1</strain>
    </source>
</reference>
<name>OGT_THEKO</name>
<gene>
    <name evidence="1" type="primary">ogt</name>
    <name evidence="4" type="synonym">mgtk</name>
    <name type="ordered locus">TK1971</name>
</gene>
<dbReference type="EC" id="2.1.1.63" evidence="1 2"/>
<dbReference type="EMBL" id="D86335">
    <property type="protein sequence ID" value="BAA29044.1"/>
    <property type="molecule type" value="Genomic_DNA"/>
</dbReference>
<dbReference type="EMBL" id="AP006878">
    <property type="protein sequence ID" value="BAD86160.1"/>
    <property type="molecule type" value="Genomic_DNA"/>
</dbReference>
<dbReference type="PIR" id="T44680">
    <property type="entry name" value="T44680"/>
</dbReference>
<dbReference type="RefSeq" id="WP_011250921.1">
    <property type="nucleotide sequence ID" value="NC_006624.1"/>
</dbReference>
<dbReference type="PDB" id="1MGT">
    <property type="method" value="X-ray"/>
    <property type="resolution" value="1.80 A"/>
    <property type="chains" value="A=1-174"/>
</dbReference>
<dbReference type="PDBsum" id="1MGT"/>
<dbReference type="SMR" id="O74023"/>
<dbReference type="FunCoup" id="O74023">
    <property type="interactions" value="3"/>
</dbReference>
<dbReference type="STRING" id="69014.TK1971"/>
<dbReference type="EnsemblBacteria" id="BAD86160">
    <property type="protein sequence ID" value="BAD86160"/>
    <property type="gene ID" value="TK1971"/>
</dbReference>
<dbReference type="GeneID" id="78448505"/>
<dbReference type="KEGG" id="tko:TK1971"/>
<dbReference type="PATRIC" id="fig|69014.16.peg.1925"/>
<dbReference type="eggNOG" id="arCOG02724">
    <property type="taxonomic scope" value="Archaea"/>
</dbReference>
<dbReference type="HOGENOM" id="CLU_000445_52_2_2"/>
<dbReference type="InParanoid" id="O74023"/>
<dbReference type="OrthoDB" id="372118at2157"/>
<dbReference type="PhylomeDB" id="O74023"/>
<dbReference type="EvolutionaryTrace" id="O74023"/>
<dbReference type="Proteomes" id="UP000000536">
    <property type="component" value="Chromosome"/>
</dbReference>
<dbReference type="GO" id="GO:0005737">
    <property type="term" value="C:cytoplasm"/>
    <property type="evidence" value="ECO:0007669"/>
    <property type="project" value="UniProtKB-SubCell"/>
</dbReference>
<dbReference type="GO" id="GO:0003908">
    <property type="term" value="F:methylated-DNA-[protein]-cysteine S-methyltransferase activity"/>
    <property type="evidence" value="ECO:0000318"/>
    <property type="project" value="GO_Central"/>
</dbReference>
<dbReference type="GO" id="GO:0006307">
    <property type="term" value="P:DNA alkylation repair"/>
    <property type="evidence" value="ECO:0007669"/>
    <property type="project" value="UniProtKB-UniRule"/>
</dbReference>
<dbReference type="GO" id="GO:0006281">
    <property type="term" value="P:DNA repair"/>
    <property type="evidence" value="ECO:0000318"/>
    <property type="project" value="GO_Central"/>
</dbReference>
<dbReference type="GO" id="GO:0032259">
    <property type="term" value="P:methylation"/>
    <property type="evidence" value="ECO:0007669"/>
    <property type="project" value="UniProtKB-KW"/>
</dbReference>
<dbReference type="CDD" id="cd06445">
    <property type="entry name" value="ATase"/>
    <property type="match status" value="1"/>
</dbReference>
<dbReference type="FunFam" id="1.10.10.10:FF:000214">
    <property type="entry name" value="Methylated-DNA--protein-cysteine methyltransferase"/>
    <property type="match status" value="1"/>
</dbReference>
<dbReference type="Gene3D" id="3.30.160.70">
    <property type="entry name" value="Methylated DNA-protein cysteine methyltransferase domain"/>
    <property type="match status" value="1"/>
</dbReference>
<dbReference type="Gene3D" id="1.10.10.10">
    <property type="entry name" value="Winged helix-like DNA-binding domain superfamily/Winged helix DNA-binding domain"/>
    <property type="match status" value="1"/>
</dbReference>
<dbReference type="HAMAP" id="MF_00772">
    <property type="entry name" value="OGT"/>
    <property type="match status" value="1"/>
</dbReference>
<dbReference type="InterPro" id="IPR054936">
    <property type="entry name" value="DNA_protcyst_Mta_Thcoc"/>
</dbReference>
<dbReference type="InterPro" id="IPR001497">
    <property type="entry name" value="MethylDNA_cys_MeTrfase_AS"/>
</dbReference>
<dbReference type="InterPro" id="IPR014048">
    <property type="entry name" value="MethylDNA_cys_MeTrfase_DNA-bd"/>
</dbReference>
<dbReference type="InterPro" id="IPR036217">
    <property type="entry name" value="MethylDNA_cys_MeTrfase_DNAb"/>
</dbReference>
<dbReference type="InterPro" id="IPR023546">
    <property type="entry name" value="MGMT"/>
</dbReference>
<dbReference type="InterPro" id="IPR015236">
    <property type="entry name" value="MGMT_N"/>
</dbReference>
<dbReference type="InterPro" id="IPR036631">
    <property type="entry name" value="MGMT_N_sf"/>
</dbReference>
<dbReference type="InterPro" id="IPR036388">
    <property type="entry name" value="WH-like_DNA-bd_sf"/>
</dbReference>
<dbReference type="NCBIfam" id="NF041132">
    <property type="entry name" value="DNA_protcyst_Mta_Thcoc"/>
    <property type="match status" value="1"/>
</dbReference>
<dbReference type="NCBIfam" id="TIGR00589">
    <property type="entry name" value="ogt"/>
    <property type="match status" value="1"/>
</dbReference>
<dbReference type="NCBIfam" id="NF003022">
    <property type="entry name" value="PRK03887.1"/>
    <property type="match status" value="1"/>
</dbReference>
<dbReference type="PANTHER" id="PTHR46460">
    <property type="entry name" value="METHYLATED-DNA--PROTEIN-CYSTEINE METHYLTRANSFERASE"/>
    <property type="match status" value="1"/>
</dbReference>
<dbReference type="PANTHER" id="PTHR46460:SF1">
    <property type="entry name" value="METHYLATED-DNA--PROTEIN-CYSTEINE METHYLTRANSFERASE"/>
    <property type="match status" value="1"/>
</dbReference>
<dbReference type="Pfam" id="PF01035">
    <property type="entry name" value="DNA_binding_1"/>
    <property type="match status" value="1"/>
</dbReference>
<dbReference type="Pfam" id="PF09153">
    <property type="entry name" value="MGMT_N"/>
    <property type="match status" value="1"/>
</dbReference>
<dbReference type="SUPFAM" id="SSF53155">
    <property type="entry name" value="Methylated DNA-protein cysteine methyltransferase domain"/>
    <property type="match status" value="1"/>
</dbReference>
<dbReference type="SUPFAM" id="SSF46767">
    <property type="entry name" value="Methylated DNA-protein cysteine methyltransferase, C-terminal domain"/>
    <property type="match status" value="1"/>
</dbReference>
<dbReference type="PROSITE" id="PS00374">
    <property type="entry name" value="MGMT"/>
    <property type="match status" value="1"/>
</dbReference>
<accession>O74023</accession>
<organism>
    <name type="scientific">Thermococcus kodakarensis (strain ATCC BAA-918 / JCM 12380 / KOD1)</name>
    <name type="common">Pyrococcus kodakaraensis (strain KOD1)</name>
    <dbReference type="NCBI Taxonomy" id="69014"/>
    <lineage>
        <taxon>Archaea</taxon>
        <taxon>Methanobacteriati</taxon>
        <taxon>Methanobacteriota</taxon>
        <taxon>Thermococci</taxon>
        <taxon>Thermococcales</taxon>
        <taxon>Thermococcaceae</taxon>
        <taxon>Thermococcus</taxon>
    </lineage>
</organism>
<keyword id="KW-0002">3D-structure</keyword>
<keyword id="KW-0963">Cytoplasm</keyword>
<keyword id="KW-0227">DNA damage</keyword>
<keyword id="KW-0234">DNA repair</keyword>
<keyword id="KW-0489">Methyltransferase</keyword>
<keyword id="KW-1185">Reference proteome</keyword>
<keyword id="KW-0808">Transferase</keyword>
<sequence length="174" mass="19517">MLSVEKFRVGERVVWIGVIFSGRVQGIAFAFDRGTLMKRIHDLAEHLGKRGVSISLDVQPSDYPEKVFKVLIGELDNASFLRELSFEGVTPFEKKVYEWLTKNVKRGSVITYGDLAKALNTSPRAVGGAMKRNPYPIVVPCHRVVAHDGIGYYSSGIEEKKFLLEIEGVKEWTS</sequence>
<evidence type="ECO:0000255" key="1">
    <source>
        <dbReference type="HAMAP-Rule" id="MF_00772"/>
    </source>
</evidence>
<evidence type="ECO:0000269" key="2">
    <source>
    </source>
</evidence>
<evidence type="ECO:0000303" key="3">
    <source>
    </source>
</evidence>
<evidence type="ECO:0000303" key="4">
    <source>
    </source>
</evidence>
<evidence type="ECO:0000305" key="5"/>
<evidence type="ECO:0000305" key="6">
    <source>
    </source>
</evidence>
<evidence type="ECO:0007829" key="7">
    <source>
        <dbReference type="PDB" id="1MGT"/>
    </source>
</evidence>
<proteinExistence type="evidence at protein level"/>